<comment type="interaction">
    <interactant intactId="EBI-18041102">
        <id>Q6UWD8</id>
    </interactant>
    <interactant intactId="EBI-12109402">
        <id>Q86W74-2</id>
        <label>ANKRD46</label>
    </interactant>
    <organismsDiffer>false</organismsDiffer>
    <experiments>3</experiments>
</comment>
<comment type="interaction">
    <interactant intactId="EBI-18041102">
        <id>Q6UWD8</id>
    </interactant>
    <interactant intactId="EBI-946046">
        <id>P54252</id>
        <label>ATXN3</label>
    </interactant>
    <organismsDiffer>false</organismsDiffer>
    <experiments>3</experiments>
</comment>
<comment type="interaction">
    <interactant intactId="EBI-18041102">
        <id>Q6UWD8</id>
    </interactant>
    <interactant intactId="EBI-12820543">
        <id>O75508</id>
        <label>CLDN11</label>
    </interactant>
    <organismsDiffer>false</organismsDiffer>
    <experiments>3</experiments>
</comment>
<comment type="interaction">
    <interactant intactId="EBI-18041102">
        <id>Q6UWD8</id>
    </interactant>
    <interactant intactId="EBI-12033434">
        <id>Q9UBY5</id>
        <label>LPAR3</label>
    </interactant>
    <organismsDiffer>false</organismsDiffer>
    <experiments>3</experiments>
</comment>
<comment type="interaction">
    <interactant intactId="EBI-18041102">
        <id>Q6UWD8</id>
    </interactant>
    <interactant intactId="EBI-2845982">
        <id>Q01453</id>
        <label>PMP22</label>
    </interactant>
    <organismsDiffer>false</organismsDiffer>
    <experiments>3</experiments>
</comment>
<comment type="interaction">
    <interactant intactId="EBI-18041102">
        <id>Q6UWD8</id>
    </interactant>
    <interactant intactId="EBI-1052363">
        <id>Q9NS64</id>
        <label>RPRM</label>
    </interactant>
    <organismsDiffer>false</organismsDiffer>
    <experiments>3</experiments>
</comment>
<comment type="interaction">
    <interactant intactId="EBI-18041102">
        <id>Q6UWD8</id>
    </interactant>
    <interactant intactId="EBI-8652744">
        <id>Q96IW7</id>
        <label>SEC22A</label>
    </interactant>
    <organismsDiffer>false</organismsDiffer>
    <experiments>3</experiments>
</comment>
<comment type="subcellular location">
    <subcellularLocation>
        <location evidence="6">Membrane</location>
        <topology evidence="6">Single-pass membrane protein</topology>
    </subcellularLocation>
</comment>
<comment type="PTM">
    <text evidence="5">O-glycosylated with core 1 or possibly core 8 glycans.</text>
</comment>
<keyword id="KW-0325">Glycoprotein</keyword>
<keyword id="KW-0472">Membrane</keyword>
<keyword id="KW-0597">Phosphoprotein</keyword>
<keyword id="KW-1267">Proteomics identification</keyword>
<keyword id="KW-1185">Reference proteome</keyword>
<keyword id="KW-0812">Transmembrane</keyword>
<keyword id="KW-1133">Transmembrane helix</keyword>
<proteinExistence type="evidence at protein level"/>
<sequence length="224" mass="24360">MPLTPEPPSGRVEGPPAWEAAPWPSLPCGPCIPIMLVLATLAALFILTTAVLAERLFRRALRPDPSHRAPTLVWRPGGELWIEPMGTARERSEDWYGSAVPLLTDRAPEPPTQVGTLEARATAPPAPSAPNSAPSNLGPQTVLEVPARSTFWGPQPWEGRPPATGLVSWAEPEQRPEASVQFGSPQARRQRPGSPDPEWGLQPRVTLEQISAFWKREGRTSVGF</sequence>
<protein>
    <recommendedName>
        <fullName>Transmembrane protein C16orf54</fullName>
    </recommendedName>
</protein>
<accession>Q6UWD8</accession>
<accession>A6NJR6</accession>
<accession>Q8NAB0</accession>
<organism>
    <name type="scientific">Homo sapiens</name>
    <name type="common">Human</name>
    <dbReference type="NCBI Taxonomy" id="9606"/>
    <lineage>
        <taxon>Eukaryota</taxon>
        <taxon>Metazoa</taxon>
        <taxon>Chordata</taxon>
        <taxon>Craniata</taxon>
        <taxon>Vertebrata</taxon>
        <taxon>Euteleostomi</taxon>
        <taxon>Mammalia</taxon>
        <taxon>Eutheria</taxon>
        <taxon>Euarchontoglires</taxon>
        <taxon>Primates</taxon>
        <taxon>Haplorrhini</taxon>
        <taxon>Catarrhini</taxon>
        <taxon>Hominidae</taxon>
        <taxon>Homo</taxon>
    </lineage>
</organism>
<evidence type="ECO:0000250" key="1">
    <source>
        <dbReference type="UniProtKB" id="Q5BK39"/>
    </source>
</evidence>
<evidence type="ECO:0000250" key="2">
    <source>
        <dbReference type="UniProtKB" id="Q8C708"/>
    </source>
</evidence>
<evidence type="ECO:0000255" key="3"/>
<evidence type="ECO:0000256" key="4">
    <source>
        <dbReference type="SAM" id="MobiDB-lite"/>
    </source>
</evidence>
<evidence type="ECO:0000269" key="5">
    <source>
    </source>
</evidence>
<evidence type="ECO:0000305" key="6"/>
<feature type="chain" id="PRO_0000279442" description="Transmembrane protein C16orf54">
    <location>
        <begin position="1"/>
        <end position="224"/>
    </location>
</feature>
<feature type="transmembrane region" description="Helical" evidence="3">
    <location>
        <begin position="32"/>
        <end position="52"/>
    </location>
</feature>
<feature type="region of interest" description="Disordered" evidence="4">
    <location>
        <begin position="104"/>
        <end position="138"/>
    </location>
</feature>
<feature type="region of interest" description="Disordered" evidence="4">
    <location>
        <begin position="152"/>
        <end position="203"/>
    </location>
</feature>
<feature type="modified residue" description="Phosphothreonine" evidence="1">
    <location>
        <position position="112"/>
    </location>
</feature>
<feature type="modified residue" description="Phosphothreonine" evidence="1">
    <location>
        <position position="116"/>
    </location>
</feature>
<feature type="modified residue" description="Phosphoserine" evidence="2">
    <location>
        <position position="194"/>
    </location>
</feature>
<feature type="glycosylation site" description="O-linked (GalNAc...) threonine" evidence="5">
    <location>
        <position position="4"/>
    </location>
</feature>
<feature type="sequence conflict" description="In Ref. 2; BAC04015." evidence="6" ref="2">
    <original>K</original>
    <variation>E</variation>
    <location>
        <position position="215"/>
    </location>
</feature>
<reference key="1">
    <citation type="journal article" date="2003" name="Genome Res.">
        <title>The secreted protein discovery initiative (SPDI), a large-scale effort to identify novel human secreted and transmembrane proteins: a bioinformatics assessment.</title>
        <authorList>
            <person name="Clark H.F."/>
            <person name="Gurney A.L."/>
            <person name="Abaya E."/>
            <person name="Baker K."/>
            <person name="Baldwin D.T."/>
            <person name="Brush J."/>
            <person name="Chen J."/>
            <person name="Chow B."/>
            <person name="Chui C."/>
            <person name="Crowley C."/>
            <person name="Currell B."/>
            <person name="Deuel B."/>
            <person name="Dowd P."/>
            <person name="Eaton D."/>
            <person name="Foster J.S."/>
            <person name="Grimaldi C."/>
            <person name="Gu Q."/>
            <person name="Hass P.E."/>
            <person name="Heldens S."/>
            <person name="Huang A."/>
            <person name="Kim H.S."/>
            <person name="Klimowski L."/>
            <person name="Jin Y."/>
            <person name="Johnson S."/>
            <person name="Lee J."/>
            <person name="Lewis L."/>
            <person name="Liao D."/>
            <person name="Mark M.R."/>
            <person name="Robbie E."/>
            <person name="Sanchez C."/>
            <person name="Schoenfeld J."/>
            <person name="Seshagiri S."/>
            <person name="Simmons L."/>
            <person name="Singh J."/>
            <person name="Smith V."/>
            <person name="Stinson J."/>
            <person name="Vagts A."/>
            <person name="Vandlen R.L."/>
            <person name="Watanabe C."/>
            <person name="Wieand D."/>
            <person name="Woods K."/>
            <person name="Xie M.-H."/>
            <person name="Yansura D.G."/>
            <person name="Yi S."/>
            <person name="Yu G."/>
            <person name="Yuan J."/>
            <person name="Zhang M."/>
            <person name="Zhang Z."/>
            <person name="Goddard A.D."/>
            <person name="Wood W.I."/>
            <person name="Godowski P.J."/>
            <person name="Gray A.M."/>
        </authorList>
    </citation>
    <scope>NUCLEOTIDE SEQUENCE [LARGE SCALE MRNA]</scope>
</reference>
<reference key="2">
    <citation type="journal article" date="2004" name="Nat. Genet.">
        <title>Complete sequencing and characterization of 21,243 full-length human cDNAs.</title>
        <authorList>
            <person name="Ota T."/>
            <person name="Suzuki Y."/>
            <person name="Nishikawa T."/>
            <person name="Otsuki T."/>
            <person name="Sugiyama T."/>
            <person name="Irie R."/>
            <person name="Wakamatsu A."/>
            <person name="Hayashi K."/>
            <person name="Sato H."/>
            <person name="Nagai K."/>
            <person name="Kimura K."/>
            <person name="Makita H."/>
            <person name="Sekine M."/>
            <person name="Obayashi M."/>
            <person name="Nishi T."/>
            <person name="Shibahara T."/>
            <person name="Tanaka T."/>
            <person name="Ishii S."/>
            <person name="Yamamoto J."/>
            <person name="Saito K."/>
            <person name="Kawai Y."/>
            <person name="Isono Y."/>
            <person name="Nakamura Y."/>
            <person name="Nagahari K."/>
            <person name="Murakami K."/>
            <person name="Yasuda T."/>
            <person name="Iwayanagi T."/>
            <person name="Wagatsuma M."/>
            <person name="Shiratori A."/>
            <person name="Sudo H."/>
            <person name="Hosoiri T."/>
            <person name="Kaku Y."/>
            <person name="Kodaira H."/>
            <person name="Kondo H."/>
            <person name="Sugawara M."/>
            <person name="Takahashi M."/>
            <person name="Kanda K."/>
            <person name="Yokoi T."/>
            <person name="Furuya T."/>
            <person name="Kikkawa E."/>
            <person name="Omura Y."/>
            <person name="Abe K."/>
            <person name="Kamihara K."/>
            <person name="Katsuta N."/>
            <person name="Sato K."/>
            <person name="Tanikawa M."/>
            <person name="Yamazaki M."/>
            <person name="Ninomiya K."/>
            <person name="Ishibashi T."/>
            <person name="Yamashita H."/>
            <person name="Murakawa K."/>
            <person name="Fujimori K."/>
            <person name="Tanai H."/>
            <person name="Kimata M."/>
            <person name="Watanabe M."/>
            <person name="Hiraoka S."/>
            <person name="Chiba Y."/>
            <person name="Ishida S."/>
            <person name="Ono Y."/>
            <person name="Takiguchi S."/>
            <person name="Watanabe S."/>
            <person name="Yosida M."/>
            <person name="Hotuta T."/>
            <person name="Kusano J."/>
            <person name="Kanehori K."/>
            <person name="Takahashi-Fujii A."/>
            <person name="Hara H."/>
            <person name="Tanase T.-O."/>
            <person name="Nomura Y."/>
            <person name="Togiya S."/>
            <person name="Komai F."/>
            <person name="Hara R."/>
            <person name="Takeuchi K."/>
            <person name="Arita M."/>
            <person name="Imose N."/>
            <person name="Musashino K."/>
            <person name="Yuuki H."/>
            <person name="Oshima A."/>
            <person name="Sasaki N."/>
            <person name="Aotsuka S."/>
            <person name="Yoshikawa Y."/>
            <person name="Matsunawa H."/>
            <person name="Ichihara T."/>
            <person name="Shiohata N."/>
            <person name="Sano S."/>
            <person name="Moriya S."/>
            <person name="Momiyama H."/>
            <person name="Satoh N."/>
            <person name="Takami S."/>
            <person name="Terashima Y."/>
            <person name="Suzuki O."/>
            <person name="Nakagawa S."/>
            <person name="Senoh A."/>
            <person name="Mizoguchi H."/>
            <person name="Goto Y."/>
            <person name="Shimizu F."/>
            <person name="Wakebe H."/>
            <person name="Hishigaki H."/>
            <person name="Watanabe T."/>
            <person name="Sugiyama A."/>
            <person name="Takemoto M."/>
            <person name="Kawakami B."/>
            <person name="Yamazaki M."/>
            <person name="Watanabe K."/>
            <person name="Kumagai A."/>
            <person name="Itakura S."/>
            <person name="Fukuzumi Y."/>
            <person name="Fujimori Y."/>
            <person name="Komiyama M."/>
            <person name="Tashiro H."/>
            <person name="Tanigami A."/>
            <person name="Fujiwara T."/>
            <person name="Ono T."/>
            <person name="Yamada K."/>
            <person name="Fujii Y."/>
            <person name="Ozaki K."/>
            <person name="Hirao M."/>
            <person name="Ohmori Y."/>
            <person name="Kawabata A."/>
            <person name="Hikiji T."/>
            <person name="Kobatake N."/>
            <person name="Inagaki H."/>
            <person name="Ikema Y."/>
            <person name="Okamoto S."/>
            <person name="Okitani R."/>
            <person name="Kawakami T."/>
            <person name="Noguchi S."/>
            <person name="Itoh T."/>
            <person name="Shigeta K."/>
            <person name="Senba T."/>
            <person name="Matsumura K."/>
            <person name="Nakajima Y."/>
            <person name="Mizuno T."/>
            <person name="Morinaga M."/>
            <person name="Sasaki M."/>
            <person name="Togashi T."/>
            <person name="Oyama M."/>
            <person name="Hata H."/>
            <person name="Watanabe M."/>
            <person name="Komatsu T."/>
            <person name="Mizushima-Sugano J."/>
            <person name="Satoh T."/>
            <person name="Shirai Y."/>
            <person name="Takahashi Y."/>
            <person name="Nakagawa K."/>
            <person name="Okumura K."/>
            <person name="Nagase T."/>
            <person name="Nomura N."/>
            <person name="Kikuchi H."/>
            <person name="Masuho Y."/>
            <person name="Yamashita R."/>
            <person name="Nakai K."/>
            <person name="Yada T."/>
            <person name="Nakamura Y."/>
            <person name="Ohara O."/>
            <person name="Isogai T."/>
            <person name="Sugano S."/>
        </authorList>
    </citation>
    <scope>NUCLEOTIDE SEQUENCE [LARGE SCALE MRNA]</scope>
    <source>
        <tissue>Spleen</tissue>
    </source>
</reference>
<reference key="3">
    <citation type="submission" date="2005-07" db="EMBL/GenBank/DDBJ databases">
        <authorList>
            <person name="Mural R.J."/>
            <person name="Istrail S."/>
            <person name="Sutton G.G."/>
            <person name="Florea L."/>
            <person name="Halpern A.L."/>
            <person name="Mobarry C.M."/>
            <person name="Lippert R."/>
            <person name="Walenz B."/>
            <person name="Shatkay H."/>
            <person name="Dew I."/>
            <person name="Miller J.R."/>
            <person name="Flanigan M.J."/>
            <person name="Edwards N.J."/>
            <person name="Bolanos R."/>
            <person name="Fasulo D."/>
            <person name="Halldorsson B.V."/>
            <person name="Hannenhalli S."/>
            <person name="Turner R."/>
            <person name="Yooseph S."/>
            <person name="Lu F."/>
            <person name="Nusskern D.R."/>
            <person name="Shue B.C."/>
            <person name="Zheng X.H."/>
            <person name="Zhong F."/>
            <person name="Delcher A.L."/>
            <person name="Huson D.H."/>
            <person name="Kravitz S.A."/>
            <person name="Mouchard L."/>
            <person name="Reinert K."/>
            <person name="Remington K.A."/>
            <person name="Clark A.G."/>
            <person name="Waterman M.S."/>
            <person name="Eichler E.E."/>
            <person name="Adams M.D."/>
            <person name="Hunkapiller M.W."/>
            <person name="Myers E.W."/>
            <person name="Venter J.C."/>
        </authorList>
    </citation>
    <scope>NUCLEOTIDE SEQUENCE [LARGE SCALE GENOMIC DNA]</scope>
</reference>
<reference key="4">
    <citation type="journal article" date="2004" name="Genome Res.">
        <title>The status, quality, and expansion of the NIH full-length cDNA project: the Mammalian Gene Collection (MGC).</title>
        <authorList>
            <consortium name="The MGC Project Team"/>
        </authorList>
    </citation>
    <scope>NUCLEOTIDE SEQUENCE [LARGE SCALE MRNA]</scope>
</reference>
<reference key="5">
    <citation type="journal article" date="2012" name="Mol. Cell. Proteomics">
        <title>Human urinary glycoproteomics; attachment site specific analysis of N- and O-linked glycosylations by CID and ECD.</title>
        <authorList>
            <person name="Halim A."/>
            <person name="Nilsson J."/>
            <person name="Ruetschi U."/>
            <person name="Hesse C."/>
            <person name="Larson G."/>
        </authorList>
    </citation>
    <scope>GLYCOSYLATION AT THR-4</scope>
    <scope>STRUCTURE OF CARBOHYDRATES</scope>
    <scope>IDENTIFICATION BY MASS SPECTROMETRY</scope>
</reference>
<name>CP054_HUMAN</name>
<dbReference type="EMBL" id="AY358833">
    <property type="protein sequence ID" value="AAQ89192.1"/>
    <property type="molecule type" value="mRNA"/>
</dbReference>
<dbReference type="EMBL" id="AK093000">
    <property type="protein sequence ID" value="BAC04015.1"/>
    <property type="molecule type" value="mRNA"/>
</dbReference>
<dbReference type="EMBL" id="CH471238">
    <property type="protein sequence ID" value="EAW80012.1"/>
    <property type="molecule type" value="Genomic_DNA"/>
</dbReference>
<dbReference type="EMBL" id="BC104466">
    <property type="protein sequence ID" value="AAI04467.1"/>
    <property type="molecule type" value="mRNA"/>
</dbReference>
<dbReference type="EMBL" id="BC104467">
    <property type="protein sequence ID" value="AAI04468.1"/>
    <property type="molecule type" value="mRNA"/>
</dbReference>
<dbReference type="CCDS" id="CCDS10652.1"/>
<dbReference type="RefSeq" id="NP_787096.2">
    <property type="nucleotide sequence ID" value="NM_175900.4"/>
</dbReference>
<dbReference type="RefSeq" id="XP_011506896.1">
    <property type="nucleotide sequence ID" value="XM_011508594.2"/>
</dbReference>
<dbReference type="BioGRID" id="129700">
    <property type="interactions" value="14"/>
</dbReference>
<dbReference type="FunCoup" id="Q6UWD8">
    <property type="interactions" value="61"/>
</dbReference>
<dbReference type="IntAct" id="Q6UWD8">
    <property type="interactions" value="16"/>
</dbReference>
<dbReference type="STRING" id="9606.ENSP00000327506"/>
<dbReference type="GlyConnect" id="783">
    <property type="glycosylation" value="2 O-Linked glycans (1 site)"/>
</dbReference>
<dbReference type="GlyCosmos" id="Q6UWD8">
    <property type="glycosylation" value="1 site, 3 glycans"/>
</dbReference>
<dbReference type="GlyGen" id="Q6UWD8">
    <property type="glycosylation" value="1 site, 3 O-linked glycans (1 site)"/>
</dbReference>
<dbReference type="iPTMnet" id="Q6UWD8"/>
<dbReference type="PhosphoSitePlus" id="Q6UWD8"/>
<dbReference type="BioMuta" id="C16orf54"/>
<dbReference type="DMDM" id="74738078"/>
<dbReference type="CPTAC" id="CPTAC-959"/>
<dbReference type="MassIVE" id="Q6UWD8"/>
<dbReference type="PaxDb" id="9606-ENSP00000327506"/>
<dbReference type="PeptideAtlas" id="Q6UWD8"/>
<dbReference type="ProteomicsDB" id="67464"/>
<dbReference type="Antibodypedia" id="54098">
    <property type="antibodies" value="70 antibodies from 14 providers"/>
</dbReference>
<dbReference type="DNASU" id="283897"/>
<dbReference type="Ensembl" id="ENST00000329410.4">
    <property type="protein sequence ID" value="ENSP00000327506.3"/>
    <property type="gene ID" value="ENSG00000185905.4"/>
</dbReference>
<dbReference type="GeneID" id="283897"/>
<dbReference type="KEGG" id="hsa:283897"/>
<dbReference type="MANE-Select" id="ENST00000329410.4">
    <property type="protein sequence ID" value="ENSP00000327506.3"/>
    <property type="RefSeq nucleotide sequence ID" value="NM_175900.4"/>
    <property type="RefSeq protein sequence ID" value="NP_787096.2"/>
</dbReference>
<dbReference type="UCSC" id="uc002dtp.3">
    <property type="organism name" value="human"/>
</dbReference>
<dbReference type="AGR" id="HGNC:26649"/>
<dbReference type="CTD" id="283897"/>
<dbReference type="GeneCards" id="C16orf54"/>
<dbReference type="HGNC" id="HGNC:26649">
    <property type="gene designation" value="C16orf54"/>
</dbReference>
<dbReference type="HPA" id="ENSG00000185905">
    <property type="expression patterns" value="Group enriched (bone marrow, lymphoid tissue)"/>
</dbReference>
<dbReference type="neXtProt" id="NX_Q6UWD8"/>
<dbReference type="OpenTargets" id="ENSG00000185905"/>
<dbReference type="PharmGKB" id="PA142672261"/>
<dbReference type="VEuPathDB" id="HostDB:ENSG00000185905"/>
<dbReference type="eggNOG" id="ENOG502SP19">
    <property type="taxonomic scope" value="Eukaryota"/>
</dbReference>
<dbReference type="GeneTree" id="ENSGT00390000014957"/>
<dbReference type="HOGENOM" id="CLU_1224436_0_0_1"/>
<dbReference type="InParanoid" id="Q6UWD8"/>
<dbReference type="OMA" id="SWPPLPC"/>
<dbReference type="OrthoDB" id="9834691at2759"/>
<dbReference type="PAN-GO" id="Q6UWD8">
    <property type="GO annotations" value="0 GO annotations based on evolutionary models"/>
</dbReference>
<dbReference type="PhylomeDB" id="Q6UWD8"/>
<dbReference type="TreeFam" id="TF337660"/>
<dbReference type="PathwayCommons" id="Q6UWD8"/>
<dbReference type="SignaLink" id="Q6UWD8"/>
<dbReference type="BioGRID-ORCS" id="283897">
    <property type="hits" value="15 hits in 1133 CRISPR screens"/>
</dbReference>
<dbReference type="Pharos" id="Q6UWD8">
    <property type="development level" value="Tdark"/>
</dbReference>
<dbReference type="PRO" id="PR:Q6UWD8"/>
<dbReference type="Proteomes" id="UP000005640">
    <property type="component" value="Chromosome 16"/>
</dbReference>
<dbReference type="RNAct" id="Q6UWD8">
    <property type="molecule type" value="protein"/>
</dbReference>
<dbReference type="Bgee" id="ENSG00000185905">
    <property type="expression patterns" value="Expressed in epithelium of nasopharynx and 119 other cell types or tissues"/>
</dbReference>
<dbReference type="GO" id="GO:0016020">
    <property type="term" value="C:membrane"/>
    <property type="evidence" value="ECO:0007669"/>
    <property type="project" value="UniProtKB-SubCell"/>
</dbReference>
<dbReference type="InterPro" id="IPR031499">
    <property type="entry name" value="DUF4689"/>
</dbReference>
<dbReference type="PANTHER" id="PTHR36134">
    <property type="entry name" value="TRANSMEMBRANE PROTEIN C16ORF54"/>
    <property type="match status" value="1"/>
</dbReference>
<dbReference type="PANTHER" id="PTHR36134:SF1">
    <property type="entry name" value="TRANSMEMBRANE PROTEIN C16ORF54"/>
    <property type="match status" value="1"/>
</dbReference>
<dbReference type="Pfam" id="PF15755">
    <property type="entry name" value="DUF4689"/>
    <property type="match status" value="1"/>
</dbReference>
<gene>
    <name type="primary">C16orf54</name>
    <name type="ORF">UNQ9389/PRO34280</name>
</gene>